<comment type="function">
    <text evidence="1">Catalyzes the condensation of ATP and 5-phosphoribose 1-diphosphate to form N'-(5'-phosphoribosyl)-ATP (PR-ATP). Has a crucial role in the pathway because the rate of histidine biosynthesis seems to be controlled primarily by regulation of HisG enzymatic activity.</text>
</comment>
<comment type="catalytic activity">
    <reaction evidence="1">
        <text>1-(5-phospho-beta-D-ribosyl)-ATP + diphosphate = 5-phospho-alpha-D-ribose 1-diphosphate + ATP</text>
        <dbReference type="Rhea" id="RHEA:18473"/>
        <dbReference type="ChEBI" id="CHEBI:30616"/>
        <dbReference type="ChEBI" id="CHEBI:33019"/>
        <dbReference type="ChEBI" id="CHEBI:58017"/>
        <dbReference type="ChEBI" id="CHEBI:73183"/>
        <dbReference type="EC" id="2.4.2.17"/>
    </reaction>
</comment>
<comment type="cofactor">
    <cofactor evidence="1">
        <name>Mg(2+)</name>
        <dbReference type="ChEBI" id="CHEBI:18420"/>
    </cofactor>
</comment>
<comment type="activity regulation">
    <text evidence="1">Feedback inhibited by histidine.</text>
</comment>
<comment type="pathway">
    <text evidence="1">Amino-acid biosynthesis; L-histidine biosynthesis; L-histidine from 5-phospho-alpha-D-ribose 1-diphosphate: step 1/9.</text>
</comment>
<comment type="subcellular location">
    <subcellularLocation>
        <location evidence="1">Cytoplasm</location>
    </subcellularLocation>
</comment>
<comment type="similarity">
    <text evidence="1">Belongs to the ATP phosphoribosyltransferase family. Long subfamily.</text>
</comment>
<gene>
    <name evidence="1" type="primary">hisG</name>
    <name type="ordered locus">Dalk_3406</name>
</gene>
<accession>B8FLE8</accession>
<protein>
    <recommendedName>
        <fullName evidence="1">ATP phosphoribosyltransferase</fullName>
        <shortName evidence="1">ATP-PRT</shortName>
        <shortName evidence="1">ATP-PRTase</shortName>
        <ecNumber evidence="1">2.4.2.17</ecNumber>
    </recommendedName>
</protein>
<feature type="chain" id="PRO_1000202528" description="ATP phosphoribosyltransferase">
    <location>
        <begin position="1"/>
        <end position="292"/>
    </location>
</feature>
<name>HIS1_DESAL</name>
<sequence>MTDTLKLGVPKGSLQNATIELFKRSGWKINVHSRNYFPDINDAEINCAICRAQEMSIYVENGTLDAGLTGKDWIAENQSDVHVVTDLVYSKVSSRPARWVLAVAGDSPVKTLEDLQGAKIATEMVGFTKRYFAERGIDVEVEFSWGATEAKVVSGLADAIVEVTETESTIRAHGLRIIKELMQTNTQLIANKKAWEDPFKQKKINQLAMMLKSALVAETLVGLKMNVPEEKADDVIAILPSLNAPTVSHLYKSTWLSVEIVVDVSVVRDLIPQLLEKGAEGIVEYSLNKVMF</sequence>
<proteinExistence type="inferred from homology"/>
<keyword id="KW-0028">Amino-acid biosynthesis</keyword>
<keyword id="KW-0067">ATP-binding</keyword>
<keyword id="KW-0963">Cytoplasm</keyword>
<keyword id="KW-0328">Glycosyltransferase</keyword>
<keyword id="KW-0368">Histidine biosynthesis</keyword>
<keyword id="KW-0460">Magnesium</keyword>
<keyword id="KW-0479">Metal-binding</keyword>
<keyword id="KW-0547">Nucleotide-binding</keyword>
<keyword id="KW-1185">Reference proteome</keyword>
<keyword id="KW-0808">Transferase</keyword>
<evidence type="ECO:0000255" key="1">
    <source>
        <dbReference type="HAMAP-Rule" id="MF_00079"/>
    </source>
</evidence>
<organism>
    <name type="scientific">Desulfatibacillum aliphaticivorans</name>
    <dbReference type="NCBI Taxonomy" id="218208"/>
    <lineage>
        <taxon>Bacteria</taxon>
        <taxon>Pseudomonadati</taxon>
        <taxon>Thermodesulfobacteriota</taxon>
        <taxon>Desulfobacteria</taxon>
        <taxon>Desulfobacterales</taxon>
        <taxon>Desulfatibacillaceae</taxon>
        <taxon>Desulfatibacillum</taxon>
    </lineage>
</organism>
<dbReference type="EC" id="2.4.2.17" evidence="1"/>
<dbReference type="EMBL" id="CP001322">
    <property type="protein sequence ID" value="ACL05094.1"/>
    <property type="molecule type" value="Genomic_DNA"/>
</dbReference>
<dbReference type="RefSeq" id="WP_015948151.1">
    <property type="nucleotide sequence ID" value="NC_011768.1"/>
</dbReference>
<dbReference type="SMR" id="B8FLE8"/>
<dbReference type="KEGG" id="dal:Dalk_3406"/>
<dbReference type="eggNOG" id="COG0040">
    <property type="taxonomic scope" value="Bacteria"/>
</dbReference>
<dbReference type="HOGENOM" id="CLU_038115_1_1_7"/>
<dbReference type="UniPathway" id="UPA00031">
    <property type="reaction ID" value="UER00006"/>
</dbReference>
<dbReference type="Proteomes" id="UP000000739">
    <property type="component" value="Chromosome"/>
</dbReference>
<dbReference type="GO" id="GO:0005737">
    <property type="term" value="C:cytoplasm"/>
    <property type="evidence" value="ECO:0007669"/>
    <property type="project" value="UniProtKB-SubCell"/>
</dbReference>
<dbReference type="GO" id="GO:0005524">
    <property type="term" value="F:ATP binding"/>
    <property type="evidence" value="ECO:0007669"/>
    <property type="project" value="UniProtKB-KW"/>
</dbReference>
<dbReference type="GO" id="GO:0003879">
    <property type="term" value="F:ATP phosphoribosyltransferase activity"/>
    <property type="evidence" value="ECO:0007669"/>
    <property type="project" value="UniProtKB-UniRule"/>
</dbReference>
<dbReference type="GO" id="GO:0000287">
    <property type="term" value="F:magnesium ion binding"/>
    <property type="evidence" value="ECO:0007669"/>
    <property type="project" value="UniProtKB-UniRule"/>
</dbReference>
<dbReference type="GO" id="GO:0000105">
    <property type="term" value="P:L-histidine biosynthetic process"/>
    <property type="evidence" value="ECO:0007669"/>
    <property type="project" value="UniProtKB-UniRule"/>
</dbReference>
<dbReference type="CDD" id="cd13593">
    <property type="entry name" value="PBP2_HisGL3"/>
    <property type="match status" value="1"/>
</dbReference>
<dbReference type="FunFam" id="3.40.190.10:FF:000258">
    <property type="entry name" value="ATP phosphoribosyltransferase"/>
    <property type="match status" value="1"/>
</dbReference>
<dbReference type="Gene3D" id="3.30.70.120">
    <property type="match status" value="1"/>
</dbReference>
<dbReference type="Gene3D" id="3.40.190.10">
    <property type="entry name" value="Periplasmic binding protein-like II"/>
    <property type="match status" value="2"/>
</dbReference>
<dbReference type="HAMAP" id="MF_00079">
    <property type="entry name" value="HisG_Long"/>
    <property type="match status" value="1"/>
</dbReference>
<dbReference type="InterPro" id="IPR020621">
    <property type="entry name" value="ATP-PRT_HisG_long"/>
</dbReference>
<dbReference type="InterPro" id="IPR013820">
    <property type="entry name" value="ATP_PRibTrfase_cat"/>
</dbReference>
<dbReference type="InterPro" id="IPR001348">
    <property type="entry name" value="ATP_PRibTrfase_HisG"/>
</dbReference>
<dbReference type="InterPro" id="IPR013115">
    <property type="entry name" value="HisG_C"/>
</dbReference>
<dbReference type="InterPro" id="IPR011322">
    <property type="entry name" value="N-reg_PII-like_a/b"/>
</dbReference>
<dbReference type="InterPro" id="IPR015867">
    <property type="entry name" value="N-reg_PII/ATP_PRibTrfase_C"/>
</dbReference>
<dbReference type="NCBIfam" id="TIGR00070">
    <property type="entry name" value="hisG"/>
    <property type="match status" value="1"/>
</dbReference>
<dbReference type="NCBIfam" id="TIGR03455">
    <property type="entry name" value="HisG_C-term"/>
    <property type="match status" value="1"/>
</dbReference>
<dbReference type="PANTHER" id="PTHR21403:SF10">
    <property type="entry name" value="ATP PHOSPHORIBOSYLTRANSFERASE"/>
    <property type="match status" value="1"/>
</dbReference>
<dbReference type="PANTHER" id="PTHR21403">
    <property type="entry name" value="ATP PHOSPHORIBOSYLTRANSFERASE ATP-PRTASE"/>
    <property type="match status" value="1"/>
</dbReference>
<dbReference type="Pfam" id="PF01634">
    <property type="entry name" value="HisG"/>
    <property type="match status" value="1"/>
</dbReference>
<dbReference type="Pfam" id="PF08029">
    <property type="entry name" value="HisG_C"/>
    <property type="match status" value="1"/>
</dbReference>
<dbReference type="SUPFAM" id="SSF54913">
    <property type="entry name" value="GlnB-like"/>
    <property type="match status" value="1"/>
</dbReference>
<dbReference type="SUPFAM" id="SSF53850">
    <property type="entry name" value="Periplasmic binding protein-like II"/>
    <property type="match status" value="1"/>
</dbReference>
<reference key="1">
    <citation type="journal article" date="2012" name="Environ. Microbiol.">
        <title>The genome sequence of Desulfatibacillum alkenivorans AK-01: a blueprint for anaerobic alkane oxidation.</title>
        <authorList>
            <person name="Callaghan A.V."/>
            <person name="Morris B.E."/>
            <person name="Pereira I.A."/>
            <person name="McInerney M.J."/>
            <person name="Austin R.N."/>
            <person name="Groves J.T."/>
            <person name="Kukor J.J."/>
            <person name="Suflita J.M."/>
            <person name="Young L.Y."/>
            <person name="Zylstra G.J."/>
            <person name="Wawrik B."/>
        </authorList>
    </citation>
    <scope>NUCLEOTIDE SEQUENCE [LARGE SCALE GENOMIC DNA]</scope>
    <source>
        <strain>AK-01</strain>
    </source>
</reference>